<evidence type="ECO:0000255" key="1">
    <source>
        <dbReference type="HAMAP-Rule" id="MF_01874"/>
    </source>
</evidence>
<gene>
    <name evidence="1" type="primary">yeaL</name>
    <name type="ordered locus">SeD_A2077</name>
</gene>
<reference key="1">
    <citation type="journal article" date="2011" name="J. Bacteriol.">
        <title>Comparative genomics of 28 Salmonella enterica isolates: evidence for CRISPR-mediated adaptive sublineage evolution.</title>
        <authorList>
            <person name="Fricke W.F."/>
            <person name="Mammel M.K."/>
            <person name="McDermott P.F."/>
            <person name="Tartera C."/>
            <person name="White D.G."/>
            <person name="Leclerc J.E."/>
            <person name="Ravel J."/>
            <person name="Cebula T.A."/>
        </authorList>
    </citation>
    <scope>NUCLEOTIDE SEQUENCE [LARGE SCALE GENOMIC DNA]</scope>
    <source>
        <strain>CT_02021853</strain>
    </source>
</reference>
<protein>
    <recommendedName>
        <fullName evidence="1">UPF0756 membrane protein YeaL</fullName>
    </recommendedName>
</protein>
<comment type="subcellular location">
    <subcellularLocation>
        <location evidence="1">Cell membrane</location>
        <topology evidence="1">Multi-pass membrane protein</topology>
    </subcellularLocation>
</comment>
<comment type="similarity">
    <text evidence="1">Belongs to the UPF0756 family.</text>
</comment>
<organism>
    <name type="scientific">Salmonella dublin (strain CT_02021853)</name>
    <dbReference type="NCBI Taxonomy" id="439851"/>
    <lineage>
        <taxon>Bacteria</taxon>
        <taxon>Pseudomonadati</taxon>
        <taxon>Pseudomonadota</taxon>
        <taxon>Gammaproteobacteria</taxon>
        <taxon>Enterobacterales</taxon>
        <taxon>Enterobacteriaceae</taxon>
        <taxon>Salmonella</taxon>
    </lineage>
</organism>
<feature type="chain" id="PRO_0000388924" description="UPF0756 membrane protein YeaL">
    <location>
        <begin position="1"/>
        <end position="148"/>
    </location>
</feature>
<feature type="transmembrane region" description="Helical" evidence="1">
    <location>
        <begin position="14"/>
        <end position="34"/>
    </location>
</feature>
<feature type="transmembrane region" description="Helical" evidence="1">
    <location>
        <begin position="51"/>
        <end position="71"/>
    </location>
</feature>
<feature type="transmembrane region" description="Helical" evidence="1">
    <location>
        <begin position="86"/>
        <end position="106"/>
    </location>
</feature>
<feature type="transmembrane region" description="Helical" evidence="1">
    <location>
        <begin position="121"/>
        <end position="141"/>
    </location>
</feature>
<sequence>MFDVTLLILLGLAALGFISHNTTVAVSILVLIIVRVTPLNTFFPWIEKQGLTVGIIILTIGVMAPIASGTLPPSTLIHSFVNWKSLVAIAVGVFVSWLGGRGITLMGNQPQLVAGLLVGTVLGVALFRGVPVGPLIAAGLVSLIVGKQ</sequence>
<accession>B5FJH1</accession>
<dbReference type="EMBL" id="CP001144">
    <property type="protein sequence ID" value="ACH74213.1"/>
    <property type="molecule type" value="Genomic_DNA"/>
</dbReference>
<dbReference type="RefSeq" id="WP_000460698.1">
    <property type="nucleotide sequence ID" value="NC_011205.1"/>
</dbReference>
<dbReference type="KEGG" id="sed:SeD_A2077"/>
<dbReference type="HOGENOM" id="CLU_125889_0_0_6"/>
<dbReference type="Proteomes" id="UP000008322">
    <property type="component" value="Chromosome"/>
</dbReference>
<dbReference type="GO" id="GO:0005886">
    <property type="term" value="C:plasma membrane"/>
    <property type="evidence" value="ECO:0007669"/>
    <property type="project" value="UniProtKB-SubCell"/>
</dbReference>
<dbReference type="HAMAP" id="MF_01874">
    <property type="entry name" value="UPF0756"/>
    <property type="match status" value="1"/>
</dbReference>
<dbReference type="InterPro" id="IPR007382">
    <property type="entry name" value="UPF0756_TM"/>
</dbReference>
<dbReference type="PANTHER" id="PTHR38452">
    <property type="entry name" value="UPF0756 MEMBRANE PROTEIN YEAL"/>
    <property type="match status" value="1"/>
</dbReference>
<dbReference type="PANTHER" id="PTHR38452:SF1">
    <property type="entry name" value="UPF0756 MEMBRANE PROTEIN YEAL"/>
    <property type="match status" value="1"/>
</dbReference>
<dbReference type="Pfam" id="PF04284">
    <property type="entry name" value="DUF441"/>
    <property type="match status" value="1"/>
</dbReference>
<name>YEAL_SALDC</name>
<keyword id="KW-1003">Cell membrane</keyword>
<keyword id="KW-0472">Membrane</keyword>
<keyword id="KW-0812">Transmembrane</keyword>
<keyword id="KW-1133">Transmembrane helix</keyword>
<proteinExistence type="inferred from homology"/>